<accession>A7I3T8</accession>
<keyword id="KW-0488">Methylation</keyword>
<keyword id="KW-1185">Reference proteome</keyword>
<keyword id="KW-0687">Ribonucleoprotein</keyword>
<keyword id="KW-0689">Ribosomal protein</keyword>
<keyword id="KW-0694">RNA-binding</keyword>
<keyword id="KW-0699">rRNA-binding</keyword>
<keyword id="KW-0820">tRNA-binding</keyword>
<sequence>MPTINQLVRKERKKIIEKSKSPALKNCPQRRGVCTRVYTTTPKKPNSALRKVAKVRLTSGFEVISYIGGEGHNLQEHSIVLVRGGRVKDLPGVKYHIVRGALDTAGVAKRTVSRSKYGAKRPKK</sequence>
<comment type="function">
    <text evidence="2">With S4 and S5 plays an important role in translational accuracy.</text>
</comment>
<comment type="function">
    <text evidence="2">Interacts with and stabilizes bases of the 16S rRNA that are involved in tRNA selection in the A site and with the mRNA backbone. Located at the interface of the 30S and 50S subunits, it traverses the body of the 30S subunit contacting proteins on the other side and probably holding the rRNA structure together. The combined cluster of proteins S8, S12 and S17 appears to hold together the shoulder and platform of the 30S subunit.</text>
</comment>
<comment type="subunit">
    <text evidence="2">Part of the 30S ribosomal subunit. Contacts proteins S8 and S17. May interact with IF1 in the 30S initiation complex.</text>
</comment>
<comment type="similarity">
    <text evidence="2">Belongs to the universal ribosomal protein uS12 family.</text>
</comment>
<proteinExistence type="inferred from homology"/>
<feature type="chain" id="PRO_1000049778" description="Small ribosomal subunit protein uS12">
    <location>
        <begin position="1"/>
        <end position="124"/>
    </location>
</feature>
<feature type="modified residue" description="3-methylthioaspartic acid" evidence="1">
    <location>
        <position position="89"/>
    </location>
</feature>
<dbReference type="EMBL" id="CP000776">
    <property type="protein sequence ID" value="ABS51605.1"/>
    <property type="molecule type" value="Genomic_DNA"/>
</dbReference>
<dbReference type="RefSeq" id="WP_012109485.1">
    <property type="nucleotide sequence ID" value="NC_009714.1"/>
</dbReference>
<dbReference type="SMR" id="A7I3T8"/>
<dbReference type="STRING" id="360107.CHAB381_1660"/>
<dbReference type="KEGG" id="cha:CHAB381_1660"/>
<dbReference type="eggNOG" id="COG0048">
    <property type="taxonomic scope" value="Bacteria"/>
</dbReference>
<dbReference type="HOGENOM" id="CLU_104295_1_2_7"/>
<dbReference type="OrthoDB" id="9802366at2"/>
<dbReference type="Proteomes" id="UP000002407">
    <property type="component" value="Chromosome"/>
</dbReference>
<dbReference type="GO" id="GO:0015935">
    <property type="term" value="C:small ribosomal subunit"/>
    <property type="evidence" value="ECO:0007669"/>
    <property type="project" value="InterPro"/>
</dbReference>
<dbReference type="GO" id="GO:0019843">
    <property type="term" value="F:rRNA binding"/>
    <property type="evidence" value="ECO:0007669"/>
    <property type="project" value="UniProtKB-UniRule"/>
</dbReference>
<dbReference type="GO" id="GO:0003735">
    <property type="term" value="F:structural constituent of ribosome"/>
    <property type="evidence" value="ECO:0007669"/>
    <property type="project" value="InterPro"/>
</dbReference>
<dbReference type="GO" id="GO:0000049">
    <property type="term" value="F:tRNA binding"/>
    <property type="evidence" value="ECO:0007669"/>
    <property type="project" value="UniProtKB-UniRule"/>
</dbReference>
<dbReference type="GO" id="GO:0006412">
    <property type="term" value="P:translation"/>
    <property type="evidence" value="ECO:0007669"/>
    <property type="project" value="UniProtKB-UniRule"/>
</dbReference>
<dbReference type="CDD" id="cd03368">
    <property type="entry name" value="Ribosomal_S12"/>
    <property type="match status" value="1"/>
</dbReference>
<dbReference type="FunFam" id="2.40.50.140:FF:000001">
    <property type="entry name" value="30S ribosomal protein S12"/>
    <property type="match status" value="1"/>
</dbReference>
<dbReference type="Gene3D" id="2.40.50.140">
    <property type="entry name" value="Nucleic acid-binding proteins"/>
    <property type="match status" value="1"/>
</dbReference>
<dbReference type="HAMAP" id="MF_00403_B">
    <property type="entry name" value="Ribosomal_uS12_B"/>
    <property type="match status" value="1"/>
</dbReference>
<dbReference type="InterPro" id="IPR012340">
    <property type="entry name" value="NA-bd_OB-fold"/>
</dbReference>
<dbReference type="InterPro" id="IPR006032">
    <property type="entry name" value="Ribosomal_uS12"/>
</dbReference>
<dbReference type="InterPro" id="IPR005679">
    <property type="entry name" value="Ribosomal_uS12_bac"/>
</dbReference>
<dbReference type="NCBIfam" id="TIGR00981">
    <property type="entry name" value="rpsL_bact"/>
    <property type="match status" value="1"/>
</dbReference>
<dbReference type="PANTHER" id="PTHR11652">
    <property type="entry name" value="30S RIBOSOMAL PROTEIN S12 FAMILY MEMBER"/>
    <property type="match status" value="1"/>
</dbReference>
<dbReference type="Pfam" id="PF00164">
    <property type="entry name" value="Ribosom_S12_S23"/>
    <property type="match status" value="1"/>
</dbReference>
<dbReference type="PIRSF" id="PIRSF002133">
    <property type="entry name" value="Ribosomal_S12/S23"/>
    <property type="match status" value="1"/>
</dbReference>
<dbReference type="PRINTS" id="PR01034">
    <property type="entry name" value="RIBOSOMALS12"/>
</dbReference>
<dbReference type="SUPFAM" id="SSF50249">
    <property type="entry name" value="Nucleic acid-binding proteins"/>
    <property type="match status" value="1"/>
</dbReference>
<dbReference type="PROSITE" id="PS00055">
    <property type="entry name" value="RIBOSOMAL_S12"/>
    <property type="match status" value="1"/>
</dbReference>
<organism>
    <name type="scientific">Campylobacter hominis (strain ATCC BAA-381 / DSM 21671 / CCUG 45161 / LMG 19568 / NCTC 13146 / CH001A)</name>
    <dbReference type="NCBI Taxonomy" id="360107"/>
    <lineage>
        <taxon>Bacteria</taxon>
        <taxon>Pseudomonadati</taxon>
        <taxon>Campylobacterota</taxon>
        <taxon>Epsilonproteobacteria</taxon>
        <taxon>Campylobacterales</taxon>
        <taxon>Campylobacteraceae</taxon>
        <taxon>Campylobacter</taxon>
    </lineage>
</organism>
<evidence type="ECO:0000250" key="1"/>
<evidence type="ECO:0000255" key="2">
    <source>
        <dbReference type="HAMAP-Rule" id="MF_00403"/>
    </source>
</evidence>
<evidence type="ECO:0000305" key="3"/>
<protein>
    <recommendedName>
        <fullName evidence="2">Small ribosomal subunit protein uS12</fullName>
    </recommendedName>
    <alternativeName>
        <fullName evidence="3">30S ribosomal protein S12</fullName>
    </alternativeName>
</protein>
<gene>
    <name evidence="2" type="primary">rpsL</name>
    <name type="ordered locus">CHAB381_1660</name>
</gene>
<name>RS12_CAMHC</name>
<reference key="1">
    <citation type="submission" date="2007-07" db="EMBL/GenBank/DDBJ databases">
        <title>Complete genome sequence of Campylobacter hominis ATCC BAA-381, a commensal isolated from the human gastrointestinal tract.</title>
        <authorList>
            <person name="Fouts D.E."/>
            <person name="Mongodin E.F."/>
            <person name="Puiu D."/>
            <person name="Sebastian Y."/>
            <person name="Miller W.G."/>
            <person name="Mandrell R.E."/>
            <person name="Nelson K.E."/>
        </authorList>
    </citation>
    <scope>NUCLEOTIDE SEQUENCE [LARGE SCALE GENOMIC DNA]</scope>
    <source>
        <strain>ATCC BAA-381 / DSM 21671 / CCUG 45161 / LMG 19568 / NCTC 13146 / CH001A</strain>
    </source>
</reference>